<keyword id="KW-1185">Reference proteome</keyword>
<proteinExistence type="inferred from homology"/>
<name>Y476_AERPE</name>
<accession>Q9YEV5</accession>
<feature type="chain" id="PRO_0000149230" description="UPF0215 protein APE_0476.1">
    <location>
        <begin position="1"/>
        <end position="185"/>
    </location>
</feature>
<reference key="1">
    <citation type="journal article" date="1999" name="DNA Res.">
        <title>Complete genome sequence of an aerobic hyper-thermophilic crenarchaeon, Aeropyrum pernix K1.</title>
        <authorList>
            <person name="Kawarabayasi Y."/>
            <person name="Hino Y."/>
            <person name="Horikawa H."/>
            <person name="Yamazaki S."/>
            <person name="Haikawa Y."/>
            <person name="Jin-no K."/>
            <person name="Takahashi M."/>
            <person name="Sekine M."/>
            <person name="Baba S."/>
            <person name="Ankai A."/>
            <person name="Kosugi H."/>
            <person name="Hosoyama A."/>
            <person name="Fukui S."/>
            <person name="Nagai Y."/>
            <person name="Nishijima K."/>
            <person name="Nakazawa H."/>
            <person name="Takamiya M."/>
            <person name="Masuda S."/>
            <person name="Funahashi T."/>
            <person name="Tanaka T."/>
            <person name="Kudoh Y."/>
            <person name="Yamazaki J."/>
            <person name="Kushida N."/>
            <person name="Oguchi A."/>
            <person name="Aoki K."/>
            <person name="Kubota K."/>
            <person name="Nakamura Y."/>
            <person name="Nomura N."/>
            <person name="Sako Y."/>
            <person name="Kikuchi H."/>
        </authorList>
    </citation>
    <scope>NUCLEOTIDE SEQUENCE [LARGE SCALE GENOMIC DNA]</scope>
    <source>
        <strain>ATCC 700893 / DSM 11879 / JCM 9820 / NBRC 100138 / K1</strain>
    </source>
</reference>
<evidence type="ECO:0000305" key="1"/>
<comment type="similarity">
    <text evidence="1">Belongs to the UPF0215 family.</text>
</comment>
<gene>
    <name type="ordered locus">APE_0476.1</name>
</gene>
<protein>
    <recommendedName>
        <fullName>UPF0215 protein APE_0476.1</fullName>
    </recommendedName>
</protein>
<dbReference type="EMBL" id="BA000002">
    <property type="protein sequence ID" value="BAA79441.2"/>
    <property type="molecule type" value="Genomic_DNA"/>
</dbReference>
<dbReference type="PIR" id="E72743">
    <property type="entry name" value="E72743"/>
</dbReference>
<dbReference type="SMR" id="Q9YEV5"/>
<dbReference type="STRING" id="272557.APE_0476.1"/>
<dbReference type="EnsemblBacteria" id="BAA79441">
    <property type="protein sequence ID" value="BAA79441"/>
    <property type="gene ID" value="APE_0476.1"/>
</dbReference>
<dbReference type="KEGG" id="ape:APE_0476.1"/>
<dbReference type="eggNOG" id="arCOG00928">
    <property type="taxonomic scope" value="Archaea"/>
</dbReference>
<dbReference type="Proteomes" id="UP000002518">
    <property type="component" value="Chromosome"/>
</dbReference>
<dbReference type="Gene3D" id="3.30.2170.10">
    <property type="entry name" value="archaeoglobus fulgidus dsm 4304 superfamily"/>
    <property type="match status" value="1"/>
</dbReference>
<dbReference type="HAMAP" id="MF_00582">
    <property type="entry name" value="UPF0215"/>
    <property type="match status" value="1"/>
</dbReference>
<dbReference type="InterPro" id="IPR002802">
    <property type="entry name" value="Endo_dU"/>
</dbReference>
<dbReference type="PANTHER" id="PTHR39518">
    <property type="entry name" value="UPF0215 PROTEIN MJ1150"/>
    <property type="match status" value="1"/>
</dbReference>
<dbReference type="PANTHER" id="PTHR39518:SF2">
    <property type="entry name" value="UPF0215 PROTEIN MJ1150"/>
    <property type="match status" value="1"/>
</dbReference>
<dbReference type="Pfam" id="PF01949">
    <property type="entry name" value="DUF99"/>
    <property type="match status" value="1"/>
</dbReference>
<dbReference type="PIRSF" id="PIRSF006380">
    <property type="entry name" value="UCP006380"/>
    <property type="match status" value="1"/>
</dbReference>
<sequence length="185" mass="19650">MGCDDGRVEKLGPQAGFTAVACISWDNRLRLPLAGSLGLVRVDGVDATSVLAGLVLRLGAAGRPVLLDSLTIGGFNIVSPPGVERLTGSPVLAVYNYRPSLERLESGLRSSRLPLAGVRARVLSLVEEAAEASTPHGPVYLVAWGLEASEARRLVLETQVYGRKPEPVRIAHYTASEASEALRRV</sequence>
<organism>
    <name type="scientific">Aeropyrum pernix (strain ATCC 700893 / DSM 11879 / JCM 9820 / NBRC 100138 / K1)</name>
    <dbReference type="NCBI Taxonomy" id="272557"/>
    <lineage>
        <taxon>Archaea</taxon>
        <taxon>Thermoproteota</taxon>
        <taxon>Thermoprotei</taxon>
        <taxon>Desulfurococcales</taxon>
        <taxon>Desulfurococcaceae</taxon>
        <taxon>Aeropyrum</taxon>
    </lineage>
</organism>